<evidence type="ECO:0000250" key="1">
    <source>
        <dbReference type="UniProtKB" id="P75799"/>
    </source>
</evidence>
<evidence type="ECO:0000255" key="2"/>
<evidence type="ECO:0000255" key="3">
    <source>
        <dbReference type="PROSITE-ProRule" id="PRU00441"/>
    </source>
</evidence>
<evidence type="ECO:0000305" key="4"/>
<feature type="chain" id="PRO_0000280009" description="Glutathione transport system permease protein GsiD">
    <location>
        <begin position="1"/>
        <end position="303"/>
    </location>
</feature>
<feature type="transmembrane region" description="Helical" evidence="3">
    <location>
        <begin position="37"/>
        <end position="57"/>
    </location>
</feature>
<feature type="transmembrane region" description="Helical" evidence="3">
    <location>
        <begin position="105"/>
        <end position="125"/>
    </location>
</feature>
<feature type="transmembrane region" description="Helical" evidence="3">
    <location>
        <begin position="144"/>
        <end position="164"/>
    </location>
</feature>
<feature type="transmembrane region" description="Helical" evidence="3">
    <location>
        <begin position="165"/>
        <end position="185"/>
    </location>
</feature>
<feature type="transmembrane region" description="Helical" evidence="3">
    <location>
        <begin position="208"/>
        <end position="228"/>
    </location>
</feature>
<feature type="transmembrane region" description="Helical" evidence="3">
    <location>
        <begin position="230"/>
        <end position="250"/>
    </location>
</feature>
<feature type="transmembrane region" description="Helical" evidence="3">
    <location>
        <begin position="266"/>
        <end position="286"/>
    </location>
</feature>
<feature type="domain" description="ABC transmembrane type-1" evidence="3">
    <location>
        <begin position="101"/>
        <end position="290"/>
    </location>
</feature>
<reference key="1">
    <citation type="journal article" date="2004" name="Nat. Genet.">
        <title>Comparison of genome degradation in Paratyphi A and Typhi, human-restricted serovars of Salmonella enterica that cause typhoid.</title>
        <authorList>
            <person name="McClelland M."/>
            <person name="Sanderson K.E."/>
            <person name="Clifton S.W."/>
            <person name="Latreille P."/>
            <person name="Porwollik S."/>
            <person name="Sabo A."/>
            <person name="Meyer R."/>
            <person name="Bieri T."/>
            <person name="Ozersky P."/>
            <person name="McLellan M."/>
            <person name="Harkins C.R."/>
            <person name="Wang C."/>
            <person name="Nguyen C."/>
            <person name="Berghoff A."/>
            <person name="Elliott G."/>
            <person name="Kohlberg S."/>
            <person name="Strong C."/>
            <person name="Du F."/>
            <person name="Carter J."/>
            <person name="Kremizki C."/>
            <person name="Layman D."/>
            <person name="Leonard S."/>
            <person name="Sun H."/>
            <person name="Fulton L."/>
            <person name="Nash W."/>
            <person name="Miner T."/>
            <person name="Minx P."/>
            <person name="Delehaunty K."/>
            <person name="Fronick C."/>
            <person name="Magrini V."/>
            <person name="Nhan M."/>
            <person name="Warren W."/>
            <person name="Florea L."/>
            <person name="Spieth J."/>
            <person name="Wilson R.K."/>
        </authorList>
    </citation>
    <scope>NUCLEOTIDE SEQUENCE [LARGE SCALE GENOMIC DNA]</scope>
    <source>
        <strain>ATCC 9150 / SARB42</strain>
    </source>
</reference>
<organism>
    <name type="scientific">Salmonella paratyphi A (strain ATCC 9150 / SARB42)</name>
    <dbReference type="NCBI Taxonomy" id="295319"/>
    <lineage>
        <taxon>Bacteria</taxon>
        <taxon>Pseudomonadati</taxon>
        <taxon>Pseudomonadota</taxon>
        <taxon>Gammaproteobacteria</taxon>
        <taxon>Enterobacterales</taxon>
        <taxon>Enterobacteriaceae</taxon>
        <taxon>Salmonella</taxon>
    </lineage>
</organism>
<comment type="function">
    <text evidence="1">Part of the ABC transporter complex GsiABCD involved in glutathione import. Probably responsible for the translocation of the substrate across the membrane.</text>
</comment>
<comment type="subunit">
    <text evidence="1">The complex is composed of two ATP-binding proteins (GsiA), two transmembrane proteins (GsiC and GsiD) and a solute-binding protein (GsiB).</text>
</comment>
<comment type="subcellular location">
    <subcellularLocation>
        <location evidence="1">Cell inner membrane</location>
        <topology evidence="2">Multi-pass membrane protein</topology>
    </subcellularLocation>
</comment>
<comment type="similarity">
    <text evidence="4">Belongs to the binding-protein-dependent transport system permease family.</text>
</comment>
<gene>
    <name evidence="1" type="primary">gsiD</name>
    <name type="ordered locus">SPA1904</name>
</gene>
<protein>
    <recommendedName>
        <fullName evidence="1">Glutathione transport system permease protein GsiD</fullName>
    </recommendedName>
</protein>
<proteinExistence type="inferred from homology"/>
<keyword id="KW-0997">Cell inner membrane</keyword>
<keyword id="KW-1003">Cell membrane</keyword>
<keyword id="KW-0472">Membrane</keyword>
<keyword id="KW-0812">Transmembrane</keyword>
<keyword id="KW-1133">Transmembrane helix</keyword>
<keyword id="KW-0813">Transport</keyword>
<accession>Q5PGP6</accession>
<dbReference type="EMBL" id="CP000026">
    <property type="protein sequence ID" value="AAV77815.1"/>
    <property type="molecule type" value="Genomic_DNA"/>
</dbReference>
<dbReference type="RefSeq" id="WP_001236024.1">
    <property type="nucleotide sequence ID" value="NC_006511.1"/>
</dbReference>
<dbReference type="SMR" id="Q5PGP6"/>
<dbReference type="KEGG" id="spt:SPA1904"/>
<dbReference type="HOGENOM" id="CLU_028518_5_3_6"/>
<dbReference type="Proteomes" id="UP000008185">
    <property type="component" value="Chromosome"/>
</dbReference>
<dbReference type="GO" id="GO:0005886">
    <property type="term" value="C:plasma membrane"/>
    <property type="evidence" value="ECO:0007669"/>
    <property type="project" value="UniProtKB-SubCell"/>
</dbReference>
<dbReference type="GO" id="GO:0071916">
    <property type="term" value="F:dipeptide transmembrane transporter activity"/>
    <property type="evidence" value="ECO:0007669"/>
    <property type="project" value="TreeGrafter"/>
</dbReference>
<dbReference type="CDD" id="cd06261">
    <property type="entry name" value="TM_PBP2"/>
    <property type="match status" value="1"/>
</dbReference>
<dbReference type="FunFam" id="1.10.3720.10:FF:000022">
    <property type="entry name" value="Glutathione ABC transporter permease GsiD"/>
    <property type="match status" value="1"/>
</dbReference>
<dbReference type="Gene3D" id="1.10.3720.10">
    <property type="entry name" value="MetI-like"/>
    <property type="match status" value="1"/>
</dbReference>
<dbReference type="InterPro" id="IPR050366">
    <property type="entry name" value="BP-dependent_transpt_permease"/>
</dbReference>
<dbReference type="InterPro" id="IPR000515">
    <property type="entry name" value="MetI-like"/>
</dbReference>
<dbReference type="InterPro" id="IPR035906">
    <property type="entry name" value="MetI-like_sf"/>
</dbReference>
<dbReference type="InterPro" id="IPR025966">
    <property type="entry name" value="OppC_N"/>
</dbReference>
<dbReference type="NCBIfam" id="NF011662">
    <property type="entry name" value="PRK15082.1"/>
    <property type="match status" value="1"/>
</dbReference>
<dbReference type="PANTHER" id="PTHR43386:SF3">
    <property type="entry name" value="GLUTATHIONE TRANSPORT SYSTEM PERMEASE PROTEIN GSID"/>
    <property type="match status" value="1"/>
</dbReference>
<dbReference type="PANTHER" id="PTHR43386">
    <property type="entry name" value="OLIGOPEPTIDE TRANSPORT SYSTEM PERMEASE PROTEIN APPC"/>
    <property type="match status" value="1"/>
</dbReference>
<dbReference type="Pfam" id="PF00528">
    <property type="entry name" value="BPD_transp_1"/>
    <property type="match status" value="1"/>
</dbReference>
<dbReference type="Pfam" id="PF12911">
    <property type="entry name" value="OppC_N"/>
    <property type="match status" value="1"/>
</dbReference>
<dbReference type="SUPFAM" id="SSF161098">
    <property type="entry name" value="MetI-like"/>
    <property type="match status" value="1"/>
</dbReference>
<dbReference type="PROSITE" id="PS50928">
    <property type="entry name" value="ABC_TM1"/>
    <property type="match status" value="1"/>
</dbReference>
<name>GSID_SALPA</name>
<sequence>MRLFNWRRQAILHAMPVVKPDQIRTPWREFWRRFRRQHVALVAGGFVLALILVAIFARWLTPYDAENYFDYDSLNNGPSLQHWFGVDSLGRDIFSRVLVGAQISLAAGVFAVFIGAIIGTVLGLLAGYYEGWWDRFIMRICDVLFAFPGILLAIAVVAVLGSGIANVIVAVAIFSIPAFARLVRGNTLVLKQQTFIESARSIGASDTTILFSHILPGTVSSIVVFFTMRIGTSIISAASLSFLGLGAQPPTPEWGAMLNEARADMVIAPHVALFPAVAIFLTVLAFNLLGDGLRDALDPKIKG</sequence>